<evidence type="ECO:0000256" key="1">
    <source>
        <dbReference type="SAM" id="MobiDB-lite"/>
    </source>
</evidence>
<evidence type="ECO:0000305" key="2"/>
<evidence type="ECO:0007744" key="3">
    <source>
    </source>
</evidence>
<dbReference type="EMBL" id="U00061">
    <property type="protein sequence ID" value="AAB68384.1"/>
    <property type="molecule type" value="Genomic_DNA"/>
</dbReference>
<dbReference type="EMBL" id="AY693077">
    <property type="protein sequence ID" value="AAT93096.1"/>
    <property type="molecule type" value="Genomic_DNA"/>
</dbReference>
<dbReference type="EMBL" id="BK006934">
    <property type="protein sequence ID" value="DAA06746.1"/>
    <property type="molecule type" value="Genomic_DNA"/>
</dbReference>
<dbReference type="PIR" id="S14049">
    <property type="entry name" value="S14049"/>
</dbReference>
<dbReference type="RefSeq" id="NP_011920.1">
    <property type="nucleotide sequence ID" value="NM_001179183.1"/>
</dbReference>
<dbReference type="BMRB" id="P0CX81"/>
<dbReference type="SMR" id="P0CX81"/>
<dbReference type="BioGRID" id="36485">
    <property type="interactions" value="14"/>
</dbReference>
<dbReference type="BioGRID" id="36487">
    <property type="interactions" value="57"/>
</dbReference>
<dbReference type="FunCoup" id="P0CX81">
    <property type="interactions" value="425"/>
</dbReference>
<dbReference type="iPTMnet" id="P0CX81"/>
<dbReference type="EnsemblFungi" id="YHR053C_mRNA">
    <property type="protein sequence ID" value="YHR053C"/>
    <property type="gene ID" value="YHR053C"/>
</dbReference>
<dbReference type="EnsemblFungi" id="YHR055C_mRNA">
    <property type="protein sequence ID" value="YHR055C"/>
    <property type="gene ID" value="YHR055C"/>
</dbReference>
<dbReference type="GeneID" id="856452"/>
<dbReference type="KEGG" id="sce:YHR053C"/>
<dbReference type="KEGG" id="sce:YHR055C"/>
<dbReference type="AGR" id="SGD:S000001097"/>
<dbReference type="SGD" id="S000001097">
    <property type="gene designation" value="CUP1-2"/>
</dbReference>
<dbReference type="VEuPathDB" id="FungiDB:YHR053C"/>
<dbReference type="VEuPathDB" id="FungiDB:YHR055C"/>
<dbReference type="GeneTree" id="ENSGT00940000181815"/>
<dbReference type="HOGENOM" id="CLU_2943095_0_0_1"/>
<dbReference type="InParanoid" id="P0CX81"/>
<dbReference type="OrthoDB" id="4036988at2759"/>
<dbReference type="BioCyc" id="YEAST:G3O-31109-MONOMER"/>
<dbReference type="PRO" id="PR:P0CX81"/>
<dbReference type="Proteomes" id="UP000002311">
    <property type="component" value="Chromosome VIII"/>
</dbReference>
<dbReference type="RNAct" id="P0CX81">
    <property type="molecule type" value="protein"/>
</dbReference>
<dbReference type="GO" id="GO:0005829">
    <property type="term" value="C:cytosol"/>
    <property type="evidence" value="ECO:0000314"/>
    <property type="project" value="SGD"/>
</dbReference>
<dbReference type="GO" id="GO:0005758">
    <property type="term" value="C:mitochondrial intermembrane space"/>
    <property type="evidence" value="ECO:0000314"/>
    <property type="project" value="SGD"/>
</dbReference>
<dbReference type="GO" id="GO:0016209">
    <property type="term" value="F:antioxidant activity"/>
    <property type="evidence" value="ECO:0000314"/>
    <property type="project" value="SGD"/>
</dbReference>
<dbReference type="GO" id="GO:0046870">
    <property type="term" value="F:cadmium ion binding"/>
    <property type="evidence" value="ECO:0000314"/>
    <property type="project" value="SGD"/>
</dbReference>
<dbReference type="GO" id="GO:0005507">
    <property type="term" value="F:copper ion binding"/>
    <property type="evidence" value="ECO:0000314"/>
    <property type="project" value="SGD"/>
</dbReference>
<dbReference type="GO" id="GO:0004784">
    <property type="term" value="F:superoxide dismutase activity"/>
    <property type="evidence" value="ECO:0000315"/>
    <property type="project" value="SGD"/>
</dbReference>
<dbReference type="GO" id="GO:0071585">
    <property type="term" value="P:detoxification of cadmium ion"/>
    <property type="evidence" value="ECO:0000315"/>
    <property type="project" value="SGD"/>
</dbReference>
<dbReference type="GO" id="GO:0010273">
    <property type="term" value="P:detoxification of copper ion"/>
    <property type="evidence" value="ECO:0000315"/>
    <property type="project" value="SGD"/>
</dbReference>
<dbReference type="GO" id="GO:0019430">
    <property type="term" value="P:removal of superoxide radicals"/>
    <property type="evidence" value="ECO:0000314"/>
    <property type="project" value="SGD"/>
</dbReference>
<dbReference type="GO" id="GO:0046688">
    <property type="term" value="P:response to copper ion"/>
    <property type="evidence" value="ECO:0000315"/>
    <property type="project" value="SGD"/>
</dbReference>
<dbReference type="Gene3D" id="4.10.650.10">
    <property type="entry name" value="Metallothionein domain superfamily, yeast"/>
    <property type="match status" value="1"/>
</dbReference>
<dbReference type="InterPro" id="IPR037130">
    <property type="entry name" value="Cup1_sf"/>
</dbReference>
<dbReference type="InterPro" id="IPR017854">
    <property type="entry name" value="Metalthion_dom_sf"/>
</dbReference>
<dbReference type="InterPro" id="IPR022710">
    <property type="entry name" value="Metalthion_dom_yeast"/>
</dbReference>
<dbReference type="Pfam" id="PF11403">
    <property type="entry name" value="Metallothio_yeast"/>
    <property type="match status" value="1"/>
</dbReference>
<dbReference type="SUPFAM" id="SSF57868">
    <property type="entry name" value="Metallothionein"/>
    <property type="match status" value="1"/>
</dbReference>
<proteinExistence type="evidence at protein level"/>
<reference key="1">
    <citation type="journal article" date="1984" name="Proc. Natl. Acad. Sci. U.S.A.">
        <title>Primary structure and transcription of an amplified genetic locus: the CUP1 locus of yeast.</title>
        <authorList>
            <person name="Karin M."/>
            <person name="Najarian R.C."/>
            <person name="Haslinger A."/>
            <person name="Valenzuela P."/>
            <person name="Welch J."/>
            <person name="Fogel S."/>
        </authorList>
    </citation>
    <scope>NUCLEOTIDE SEQUENCE [GENOMIC DNA]</scope>
</reference>
<reference key="2">
    <citation type="journal article" date="1984" name="Proc. Natl. Acad. Sci. U.S.A.">
        <title>Copper metallothionein of yeast, structure of the gene, and regulation of expression.</title>
        <authorList>
            <person name="Butt T.R."/>
            <person name="Sternberg E.J."/>
            <person name="Gorman J.A."/>
            <person name="Clark P."/>
            <person name="Hamer D."/>
            <person name="Rosenberg M."/>
            <person name="Crooke S.T."/>
        </authorList>
    </citation>
    <scope>NUCLEOTIDE SEQUENCE [GENOMIC DNA]</scope>
</reference>
<reference key="3">
    <citation type="journal article" date="1985" name="J. Biol. Chem.">
        <title>Yeast metallothionein. Sequence and metal-binding properties.</title>
        <authorList>
            <person name="Winge D.R."/>
            <person name="Nielson K.B."/>
            <person name="Gray W.R."/>
            <person name="Hamer D.H."/>
        </authorList>
    </citation>
    <scope>PROTEIN SEQUENCE</scope>
</reference>
<reference key="4">
    <citation type="journal article" date="1991" name="Mol. Gen. Genet.">
        <title>Multicopy CUP1 plasmids enhance cadmium and copper resistance levels in yeast.</title>
        <authorList>
            <person name="Jeyaprakash A."/>
            <person name="Welch J.W."/>
            <person name="Fogel S."/>
        </authorList>
    </citation>
    <scope>NUCLEOTIDE SEQUENCE [GENOMIC DNA]</scope>
</reference>
<reference key="5">
    <citation type="journal article" date="1994" name="Science">
        <title>Complete nucleotide sequence of Saccharomyces cerevisiae chromosome VIII.</title>
        <authorList>
            <person name="Johnston M."/>
            <person name="Andrews S."/>
            <person name="Brinkman R."/>
            <person name="Cooper J."/>
            <person name="Ding H."/>
            <person name="Dover J."/>
            <person name="Du Z."/>
            <person name="Favello A."/>
            <person name="Fulton L."/>
            <person name="Gattung S."/>
            <person name="Geisel C."/>
            <person name="Kirsten J."/>
            <person name="Kucaba T."/>
            <person name="Hillier L.W."/>
            <person name="Jier M."/>
            <person name="Johnston L."/>
            <person name="Langston Y."/>
            <person name="Latreille P."/>
            <person name="Louis E.J."/>
            <person name="Macri C."/>
            <person name="Mardis E."/>
            <person name="Menezes S."/>
            <person name="Mouser L."/>
            <person name="Nhan M."/>
            <person name="Rifkin L."/>
            <person name="Riles L."/>
            <person name="St Peter H."/>
            <person name="Trevaskis E."/>
            <person name="Vaughan K."/>
            <person name="Vignati D."/>
            <person name="Wilcox L."/>
            <person name="Wohldman P."/>
            <person name="Waterston R."/>
            <person name="Wilson R."/>
            <person name="Vaudin M."/>
        </authorList>
    </citation>
    <scope>NUCLEOTIDE SEQUENCE [LARGE SCALE GENOMIC DNA]</scope>
    <source>
        <strain>ATCC 204508 / S288c</strain>
    </source>
</reference>
<reference key="6">
    <citation type="journal article" date="2014" name="G3 (Bethesda)">
        <title>The reference genome sequence of Saccharomyces cerevisiae: Then and now.</title>
        <authorList>
            <person name="Engel S.R."/>
            <person name="Dietrich F.S."/>
            <person name="Fisk D.G."/>
            <person name="Binkley G."/>
            <person name="Balakrishnan R."/>
            <person name="Costanzo M.C."/>
            <person name="Dwight S.S."/>
            <person name="Hitz B.C."/>
            <person name="Karra K."/>
            <person name="Nash R.S."/>
            <person name="Weng S."/>
            <person name="Wong E.D."/>
            <person name="Lloyd P."/>
            <person name="Skrzypek M.S."/>
            <person name="Miyasato S.R."/>
            <person name="Simison M."/>
            <person name="Cherry J.M."/>
        </authorList>
    </citation>
    <scope>GENOME REANNOTATION</scope>
    <source>
        <strain>ATCC 204508 / S288c</strain>
    </source>
</reference>
<reference key="7">
    <citation type="journal article" date="2007" name="Genome Res.">
        <title>Approaching a complete repository of sequence-verified protein-encoding clones for Saccharomyces cerevisiae.</title>
        <authorList>
            <person name="Hu Y."/>
            <person name="Rolfs A."/>
            <person name="Bhullar B."/>
            <person name="Murthy T.V.S."/>
            <person name="Zhu C."/>
            <person name="Berger M.F."/>
            <person name="Camargo A.A."/>
            <person name="Kelley F."/>
            <person name="McCarron S."/>
            <person name="Jepson D."/>
            <person name="Richardson A."/>
            <person name="Raphael J."/>
            <person name="Moreira D."/>
            <person name="Taycher E."/>
            <person name="Zuo D."/>
            <person name="Mohr S."/>
            <person name="Kane M.F."/>
            <person name="Williamson J."/>
            <person name="Simpson A.J.G."/>
            <person name="Bulyk M.L."/>
            <person name="Harlow E."/>
            <person name="Marsischky G."/>
            <person name="Kolodner R.D."/>
            <person name="LaBaer J."/>
        </authorList>
    </citation>
    <scope>NUCLEOTIDE SEQUENCE [GENOMIC DNA]</scope>
    <source>
        <strain>ATCC 204508 / S288c</strain>
    </source>
</reference>
<reference key="8">
    <citation type="journal article" date="1988" name="J. Biol. Chem.">
        <title>X-ray absorption studies of yeast copper metallothionein.</title>
        <authorList>
            <person name="George G.N."/>
            <person name="Byrd J."/>
            <person name="Winge D.R."/>
        </authorList>
    </citation>
    <scope>ABSORPTION SPECTROSCOPY</scope>
</reference>
<reference key="9">
    <citation type="journal article" date="2012" name="Proteomics">
        <title>Sites of ubiquitin attachment in Saccharomyces cerevisiae.</title>
        <authorList>
            <person name="Starita L.M."/>
            <person name="Lo R.S."/>
            <person name="Eng J.K."/>
            <person name="von Haller P.D."/>
            <person name="Fields S."/>
        </authorList>
    </citation>
    <scope>UBIQUITINATION [LARGE SCALE ANALYSIS] AT LYS-30</scope>
    <scope>IDENTIFICATION BY MASS SPECTROMETRY [LARGE SCALE ANALYSIS]</scope>
</reference>
<protein>
    <recommendedName>
        <fullName>Copper metallothionein 1-2</fullName>
        <shortName>Cu-MT</shortName>
        <shortName>Cu-metallothionein</shortName>
    </recommendedName>
    <alternativeName>
        <fullName>Copper chelatin</fullName>
    </alternativeName>
    <alternativeName>
        <fullName>Copper thionein</fullName>
    </alternativeName>
</protein>
<gene>
    <name type="primary">CUP1-2</name>
    <name type="synonym">MTH1</name>
    <name type="ordered locus">YHR055C</name>
</gene>
<comment type="function">
    <text>Protects the cell against copper toxicity by tightly chelating copper ions. May also act as a depository for copper designated for the effective transfer into the apo forms of copper proteins.</text>
</comment>
<comment type="domain">
    <text>Contains 1 metal-binding domain: 6 to 8 copper ions are chelated within a single copper-thiolate cluster and are coordinated via cysteinyl thiolate bridges to 10 cysteine ligands. 6 copper ions are trigonally coordinated, whereas the other 2 are only digonally coordinated.</text>
</comment>
<comment type="miscellaneous">
    <text>There are 2 copies for copper thionein in yeast. The 2 identical copies CUP1-1 and CUP1-2 are arranged in tandem.</text>
</comment>
<comment type="similarity">
    <text evidence="2">Belongs to the metallothionein superfamily. Type 12 family.</text>
</comment>
<name>MTCU2_YEAST</name>
<sequence>MFSELINFQNEGHECQCQCGSCKNNEQCQKSCSCPTGCNSDDKCPCGNKSEETKKSCCSGK</sequence>
<feature type="propeptide" id="PRO_0000410444">
    <location>
        <begin position="1"/>
        <end position="8"/>
    </location>
</feature>
<feature type="chain" id="PRO_0000410445" description="Copper metallothionein 1-2">
    <location>
        <begin position="9"/>
        <end position="61"/>
    </location>
</feature>
<feature type="region of interest" description="Disordered" evidence="1">
    <location>
        <begin position="37"/>
        <end position="61"/>
    </location>
</feature>
<feature type="compositionally biased region" description="Basic and acidic residues" evidence="1">
    <location>
        <begin position="40"/>
        <end position="55"/>
    </location>
</feature>
<feature type="binding site">
    <location>
        <position position="15"/>
    </location>
    <ligand>
        <name>Cu cation</name>
        <dbReference type="ChEBI" id="CHEBI:23378"/>
        <label>1</label>
    </ligand>
</feature>
<feature type="binding site">
    <location>
        <position position="15"/>
    </location>
    <ligand>
        <name>Cu cation</name>
        <dbReference type="ChEBI" id="CHEBI:23378"/>
        <label>2</label>
    </ligand>
</feature>
<feature type="binding site">
    <location>
        <position position="17"/>
    </location>
    <ligand>
        <name>Cu cation</name>
        <dbReference type="ChEBI" id="CHEBI:23378"/>
        <label>1</label>
    </ligand>
</feature>
<feature type="binding site">
    <location>
        <position position="17"/>
    </location>
    <ligand>
        <name>Cu cation</name>
        <dbReference type="ChEBI" id="CHEBI:23378"/>
        <label>3</label>
    </ligand>
</feature>
<feature type="binding site">
    <location>
        <position position="19"/>
    </location>
    <ligand>
        <name>Cu cation</name>
        <dbReference type="ChEBI" id="CHEBI:23378"/>
        <label>4</label>
    </ligand>
</feature>
<feature type="binding site">
    <location>
        <position position="19"/>
    </location>
    <ligand>
        <name>Cu cation</name>
        <dbReference type="ChEBI" id="CHEBI:23378"/>
        <label>5</label>
    </ligand>
</feature>
<feature type="binding site">
    <location>
        <position position="22"/>
    </location>
    <ligand>
        <name>Cu cation</name>
        <dbReference type="ChEBI" id="CHEBI:23378"/>
        <label>3</label>
    </ligand>
</feature>
<feature type="binding site">
    <location>
        <position position="22"/>
    </location>
    <ligand>
        <name>Cu cation</name>
        <dbReference type="ChEBI" id="CHEBI:23378"/>
        <label>4</label>
    </ligand>
</feature>
<feature type="binding site">
    <location>
        <position position="22"/>
    </location>
    <ligand>
        <name>Cu cation</name>
        <dbReference type="ChEBI" id="CHEBI:23378"/>
        <label>6</label>
    </ligand>
</feature>
<feature type="binding site">
    <location>
        <position position="28"/>
    </location>
    <ligand>
        <name>Cu cation</name>
        <dbReference type="ChEBI" id="CHEBI:23378"/>
        <label>2</label>
    </ligand>
</feature>
<feature type="binding site">
    <location>
        <position position="28"/>
    </location>
    <ligand>
        <name>Cu cation</name>
        <dbReference type="ChEBI" id="CHEBI:23378"/>
        <label>6</label>
    </ligand>
</feature>
<feature type="binding site">
    <location>
        <position position="32"/>
    </location>
    <ligand>
        <name>Cu cation</name>
        <dbReference type="ChEBI" id="CHEBI:23378"/>
        <label>1</label>
    </ligand>
</feature>
<feature type="binding site">
    <location>
        <position position="32"/>
    </location>
    <ligand>
        <name>Cu cation</name>
        <dbReference type="ChEBI" id="CHEBI:23378"/>
        <label>7</label>
    </ligand>
</feature>
<feature type="binding site">
    <location>
        <position position="34"/>
    </location>
    <ligand>
        <name>Cu cation</name>
        <dbReference type="ChEBI" id="CHEBI:23378"/>
        <label>3</label>
    </ligand>
</feature>
<feature type="binding site">
    <location>
        <position position="34"/>
    </location>
    <ligand>
        <name>Cu cation</name>
        <dbReference type="ChEBI" id="CHEBI:23378"/>
        <label>7</label>
    </ligand>
</feature>
<feature type="binding site">
    <location>
        <position position="34"/>
    </location>
    <ligand>
        <name>Cu cation</name>
        <dbReference type="ChEBI" id="CHEBI:23378"/>
        <label>8</label>
    </ligand>
</feature>
<feature type="binding site">
    <location>
        <position position="38"/>
    </location>
    <ligand>
        <name>Cu cation</name>
        <dbReference type="ChEBI" id="CHEBI:23378"/>
        <label>5</label>
    </ligand>
</feature>
<feature type="binding site">
    <location>
        <position position="38"/>
    </location>
    <ligand>
        <name>Cu cation</name>
        <dbReference type="ChEBI" id="CHEBI:23378"/>
        <label>8</label>
    </ligand>
</feature>
<feature type="binding site">
    <location>
        <position position="44"/>
    </location>
    <ligand>
        <name>Cu cation</name>
        <dbReference type="ChEBI" id="CHEBI:23378"/>
        <label>4</label>
    </ligand>
</feature>
<feature type="binding site">
    <location>
        <position position="44"/>
    </location>
    <ligand>
        <name>Cu cation</name>
        <dbReference type="ChEBI" id="CHEBI:23378"/>
        <label>8</label>
    </ligand>
</feature>
<feature type="binding site">
    <location>
        <position position="46"/>
    </location>
    <ligand>
        <name>Cu cation</name>
        <dbReference type="ChEBI" id="CHEBI:23378"/>
        <label>6</label>
    </ligand>
</feature>
<feature type="binding site">
    <location>
        <position position="46"/>
    </location>
    <ligand>
        <name>Cu cation</name>
        <dbReference type="ChEBI" id="CHEBI:23378"/>
        <label>7</label>
    </ligand>
</feature>
<feature type="cross-link" description="Glycyl lysine isopeptide (Lys-Gly) (interchain with G-Cter in ubiquitin)" evidence="3">
    <location>
        <position position="30"/>
    </location>
</feature>
<accession>P0CX81</accession>
<accession>D3DL02</accession>
<accession>P07215</accession>
<keyword id="KW-0186">Copper</keyword>
<keyword id="KW-0903">Direct protein sequencing</keyword>
<keyword id="KW-1017">Isopeptide bond</keyword>
<keyword id="KW-0479">Metal-binding</keyword>
<keyword id="KW-0480">Metal-thiolate cluster</keyword>
<keyword id="KW-1185">Reference proteome</keyword>
<keyword id="KW-0832">Ubl conjugation</keyword>
<organism>
    <name type="scientific">Saccharomyces cerevisiae (strain ATCC 204508 / S288c)</name>
    <name type="common">Baker's yeast</name>
    <dbReference type="NCBI Taxonomy" id="559292"/>
    <lineage>
        <taxon>Eukaryota</taxon>
        <taxon>Fungi</taxon>
        <taxon>Dikarya</taxon>
        <taxon>Ascomycota</taxon>
        <taxon>Saccharomycotina</taxon>
        <taxon>Saccharomycetes</taxon>
        <taxon>Saccharomycetales</taxon>
        <taxon>Saccharomycetaceae</taxon>
        <taxon>Saccharomyces</taxon>
    </lineage>
</organism>